<proteinExistence type="inferred from homology"/>
<protein>
    <recommendedName>
        <fullName evidence="1">Histidinol dehydrogenase</fullName>
        <shortName evidence="1">HDH</shortName>
        <ecNumber evidence="1">1.1.1.23</ecNumber>
    </recommendedName>
</protein>
<feature type="chain" id="PRO_0000135720" description="Histidinol dehydrogenase">
    <location>
        <begin position="1"/>
        <end position="429"/>
    </location>
</feature>
<feature type="active site" description="Proton acceptor" evidence="1">
    <location>
        <position position="324"/>
    </location>
</feature>
<feature type="active site" description="Proton acceptor" evidence="1">
    <location>
        <position position="325"/>
    </location>
</feature>
<feature type="binding site" evidence="1">
    <location>
        <position position="127"/>
    </location>
    <ligand>
        <name>NAD(+)</name>
        <dbReference type="ChEBI" id="CHEBI:57540"/>
    </ligand>
</feature>
<feature type="binding site" evidence="1">
    <location>
        <position position="188"/>
    </location>
    <ligand>
        <name>NAD(+)</name>
        <dbReference type="ChEBI" id="CHEBI:57540"/>
    </ligand>
</feature>
<feature type="binding site" evidence="1">
    <location>
        <position position="211"/>
    </location>
    <ligand>
        <name>NAD(+)</name>
        <dbReference type="ChEBI" id="CHEBI:57540"/>
    </ligand>
</feature>
<feature type="binding site" evidence="1">
    <location>
        <position position="234"/>
    </location>
    <ligand>
        <name>substrate</name>
    </ligand>
</feature>
<feature type="binding site" evidence="1">
    <location>
        <position position="256"/>
    </location>
    <ligand>
        <name>substrate</name>
    </ligand>
</feature>
<feature type="binding site" evidence="1">
    <location>
        <position position="256"/>
    </location>
    <ligand>
        <name>Zn(2+)</name>
        <dbReference type="ChEBI" id="CHEBI:29105"/>
    </ligand>
</feature>
<feature type="binding site" evidence="1">
    <location>
        <position position="259"/>
    </location>
    <ligand>
        <name>substrate</name>
    </ligand>
</feature>
<feature type="binding site" evidence="1">
    <location>
        <position position="259"/>
    </location>
    <ligand>
        <name>Zn(2+)</name>
        <dbReference type="ChEBI" id="CHEBI:29105"/>
    </ligand>
</feature>
<feature type="binding site" evidence="1">
    <location>
        <position position="325"/>
    </location>
    <ligand>
        <name>substrate</name>
    </ligand>
</feature>
<feature type="binding site" evidence="1">
    <location>
        <position position="358"/>
    </location>
    <ligand>
        <name>substrate</name>
    </ligand>
</feature>
<feature type="binding site" evidence="1">
    <location>
        <position position="358"/>
    </location>
    <ligand>
        <name>Zn(2+)</name>
        <dbReference type="ChEBI" id="CHEBI:29105"/>
    </ligand>
</feature>
<feature type="binding site" evidence="1">
    <location>
        <position position="412"/>
    </location>
    <ligand>
        <name>substrate</name>
    </ligand>
</feature>
<feature type="binding site" evidence="1">
    <location>
        <position position="417"/>
    </location>
    <ligand>
        <name>substrate</name>
    </ligand>
</feature>
<feature type="binding site" evidence="1">
    <location>
        <position position="417"/>
    </location>
    <ligand>
        <name>Zn(2+)</name>
        <dbReference type="ChEBI" id="CHEBI:29105"/>
    </ligand>
</feature>
<name>HISX_BACAN</name>
<dbReference type="EC" id="1.1.1.23" evidence="1"/>
<dbReference type="EMBL" id="AE016879">
    <property type="protein sequence ID" value="AAP25369.1"/>
    <property type="molecule type" value="Genomic_DNA"/>
</dbReference>
<dbReference type="EMBL" id="AE017334">
    <property type="protein sequence ID" value="AAT30522.1"/>
    <property type="molecule type" value="Genomic_DNA"/>
</dbReference>
<dbReference type="EMBL" id="AE017225">
    <property type="protein sequence ID" value="AAT53637.1"/>
    <property type="molecule type" value="Genomic_DNA"/>
</dbReference>
<dbReference type="RefSeq" id="NP_843883.1">
    <property type="nucleotide sequence ID" value="NC_003997.3"/>
</dbReference>
<dbReference type="RefSeq" id="WP_000406994.1">
    <property type="nucleotide sequence ID" value="NZ_WXXJ01000017.1"/>
</dbReference>
<dbReference type="RefSeq" id="YP_027586.1">
    <property type="nucleotide sequence ID" value="NC_005945.1"/>
</dbReference>
<dbReference type="SMR" id="Q81T62"/>
<dbReference type="STRING" id="261594.GBAA_1426"/>
<dbReference type="DNASU" id="1085728"/>
<dbReference type="GeneID" id="45021405"/>
<dbReference type="KEGG" id="ban:BA_1426"/>
<dbReference type="KEGG" id="banh:HYU01_07230"/>
<dbReference type="KEGG" id="bar:GBAA_1426"/>
<dbReference type="KEGG" id="bat:BAS1317"/>
<dbReference type="PATRIC" id="fig|198094.11.peg.1399"/>
<dbReference type="eggNOG" id="COG0141">
    <property type="taxonomic scope" value="Bacteria"/>
</dbReference>
<dbReference type="HOGENOM" id="CLU_006732_3_3_9"/>
<dbReference type="OMA" id="YIAGPNH"/>
<dbReference type="OrthoDB" id="9805269at2"/>
<dbReference type="UniPathway" id="UPA00031">
    <property type="reaction ID" value="UER00014"/>
</dbReference>
<dbReference type="Proteomes" id="UP000000427">
    <property type="component" value="Chromosome"/>
</dbReference>
<dbReference type="Proteomes" id="UP000000594">
    <property type="component" value="Chromosome"/>
</dbReference>
<dbReference type="GO" id="GO:0005829">
    <property type="term" value="C:cytosol"/>
    <property type="evidence" value="ECO:0007669"/>
    <property type="project" value="TreeGrafter"/>
</dbReference>
<dbReference type="GO" id="GO:0004399">
    <property type="term" value="F:histidinol dehydrogenase activity"/>
    <property type="evidence" value="ECO:0007669"/>
    <property type="project" value="UniProtKB-UniRule"/>
</dbReference>
<dbReference type="GO" id="GO:0051287">
    <property type="term" value="F:NAD binding"/>
    <property type="evidence" value="ECO:0007669"/>
    <property type="project" value="InterPro"/>
</dbReference>
<dbReference type="GO" id="GO:0008270">
    <property type="term" value="F:zinc ion binding"/>
    <property type="evidence" value="ECO:0007669"/>
    <property type="project" value="UniProtKB-UniRule"/>
</dbReference>
<dbReference type="GO" id="GO:0000105">
    <property type="term" value="P:L-histidine biosynthetic process"/>
    <property type="evidence" value="ECO:0007669"/>
    <property type="project" value="UniProtKB-UniRule"/>
</dbReference>
<dbReference type="CDD" id="cd06572">
    <property type="entry name" value="Histidinol_dh"/>
    <property type="match status" value="1"/>
</dbReference>
<dbReference type="FunFam" id="3.40.50.1980:FF:000001">
    <property type="entry name" value="Histidinol dehydrogenase"/>
    <property type="match status" value="1"/>
</dbReference>
<dbReference type="FunFam" id="3.40.50.1980:FF:000026">
    <property type="entry name" value="Histidinol dehydrogenase"/>
    <property type="match status" value="1"/>
</dbReference>
<dbReference type="FunFam" id="1.20.5.1300:FF:000002">
    <property type="entry name" value="Histidinol dehydrogenase, chloroplastic"/>
    <property type="match status" value="1"/>
</dbReference>
<dbReference type="Gene3D" id="1.20.5.1300">
    <property type="match status" value="1"/>
</dbReference>
<dbReference type="Gene3D" id="3.40.50.1980">
    <property type="entry name" value="Nitrogenase molybdenum iron protein domain"/>
    <property type="match status" value="2"/>
</dbReference>
<dbReference type="HAMAP" id="MF_01024">
    <property type="entry name" value="HisD"/>
    <property type="match status" value="1"/>
</dbReference>
<dbReference type="InterPro" id="IPR016161">
    <property type="entry name" value="Ald_DH/histidinol_DH"/>
</dbReference>
<dbReference type="InterPro" id="IPR001692">
    <property type="entry name" value="Histidinol_DH_CS"/>
</dbReference>
<dbReference type="InterPro" id="IPR022695">
    <property type="entry name" value="Histidinol_DH_monofunct"/>
</dbReference>
<dbReference type="InterPro" id="IPR012131">
    <property type="entry name" value="Hstdl_DH"/>
</dbReference>
<dbReference type="NCBIfam" id="TIGR00069">
    <property type="entry name" value="hisD"/>
    <property type="match status" value="1"/>
</dbReference>
<dbReference type="PANTHER" id="PTHR21256:SF2">
    <property type="entry name" value="HISTIDINE BIOSYNTHESIS TRIFUNCTIONAL PROTEIN"/>
    <property type="match status" value="1"/>
</dbReference>
<dbReference type="PANTHER" id="PTHR21256">
    <property type="entry name" value="HISTIDINOL DEHYDROGENASE HDH"/>
    <property type="match status" value="1"/>
</dbReference>
<dbReference type="Pfam" id="PF00815">
    <property type="entry name" value="Histidinol_dh"/>
    <property type="match status" value="1"/>
</dbReference>
<dbReference type="PIRSF" id="PIRSF000099">
    <property type="entry name" value="Histidinol_dh"/>
    <property type="match status" value="1"/>
</dbReference>
<dbReference type="PRINTS" id="PR00083">
    <property type="entry name" value="HOLDHDRGNASE"/>
</dbReference>
<dbReference type="SUPFAM" id="SSF53720">
    <property type="entry name" value="ALDH-like"/>
    <property type="match status" value="1"/>
</dbReference>
<dbReference type="PROSITE" id="PS00611">
    <property type="entry name" value="HISOL_DEHYDROGENASE"/>
    <property type="match status" value="1"/>
</dbReference>
<evidence type="ECO:0000255" key="1">
    <source>
        <dbReference type="HAMAP-Rule" id="MF_01024"/>
    </source>
</evidence>
<keyword id="KW-0028">Amino-acid biosynthesis</keyword>
<keyword id="KW-0368">Histidine biosynthesis</keyword>
<keyword id="KW-0479">Metal-binding</keyword>
<keyword id="KW-0520">NAD</keyword>
<keyword id="KW-0560">Oxidoreductase</keyword>
<keyword id="KW-1185">Reference proteome</keyword>
<keyword id="KW-0862">Zinc</keyword>
<reference key="1">
    <citation type="journal article" date="2003" name="Nature">
        <title>The genome sequence of Bacillus anthracis Ames and comparison to closely related bacteria.</title>
        <authorList>
            <person name="Read T.D."/>
            <person name="Peterson S.N."/>
            <person name="Tourasse N.J."/>
            <person name="Baillie L.W."/>
            <person name="Paulsen I.T."/>
            <person name="Nelson K.E."/>
            <person name="Tettelin H."/>
            <person name="Fouts D.E."/>
            <person name="Eisen J.A."/>
            <person name="Gill S.R."/>
            <person name="Holtzapple E.K."/>
            <person name="Okstad O.A."/>
            <person name="Helgason E."/>
            <person name="Rilstone J."/>
            <person name="Wu M."/>
            <person name="Kolonay J.F."/>
            <person name="Beanan M.J."/>
            <person name="Dodson R.J."/>
            <person name="Brinkac L.M."/>
            <person name="Gwinn M.L."/>
            <person name="DeBoy R.T."/>
            <person name="Madpu R."/>
            <person name="Daugherty S.C."/>
            <person name="Durkin A.S."/>
            <person name="Haft D.H."/>
            <person name="Nelson W.C."/>
            <person name="Peterson J.D."/>
            <person name="Pop M."/>
            <person name="Khouri H.M."/>
            <person name="Radune D."/>
            <person name="Benton J.L."/>
            <person name="Mahamoud Y."/>
            <person name="Jiang L."/>
            <person name="Hance I.R."/>
            <person name="Weidman J.F."/>
            <person name="Berry K.J."/>
            <person name="Plaut R.D."/>
            <person name="Wolf A.M."/>
            <person name="Watkins K.L."/>
            <person name="Nierman W.C."/>
            <person name="Hazen A."/>
            <person name="Cline R.T."/>
            <person name="Redmond C."/>
            <person name="Thwaite J.E."/>
            <person name="White O."/>
            <person name="Salzberg S.L."/>
            <person name="Thomason B."/>
            <person name="Friedlander A.M."/>
            <person name="Koehler T.M."/>
            <person name="Hanna P.C."/>
            <person name="Kolstoe A.-B."/>
            <person name="Fraser C.M."/>
        </authorList>
    </citation>
    <scope>NUCLEOTIDE SEQUENCE [LARGE SCALE GENOMIC DNA]</scope>
    <source>
        <strain>Ames / isolate Porton</strain>
    </source>
</reference>
<reference key="2">
    <citation type="journal article" date="2009" name="J. Bacteriol.">
        <title>The complete genome sequence of Bacillus anthracis Ames 'Ancestor'.</title>
        <authorList>
            <person name="Ravel J."/>
            <person name="Jiang L."/>
            <person name="Stanley S.T."/>
            <person name="Wilson M.R."/>
            <person name="Decker R.S."/>
            <person name="Read T.D."/>
            <person name="Worsham P."/>
            <person name="Keim P.S."/>
            <person name="Salzberg S.L."/>
            <person name="Fraser-Liggett C.M."/>
            <person name="Rasko D.A."/>
        </authorList>
    </citation>
    <scope>NUCLEOTIDE SEQUENCE [LARGE SCALE GENOMIC DNA]</scope>
    <source>
        <strain>Ames ancestor</strain>
    </source>
</reference>
<reference key="3">
    <citation type="submission" date="2004-01" db="EMBL/GenBank/DDBJ databases">
        <title>Complete genome sequence of Bacillus anthracis Sterne.</title>
        <authorList>
            <person name="Brettin T.S."/>
            <person name="Bruce D."/>
            <person name="Challacombe J.F."/>
            <person name="Gilna P."/>
            <person name="Han C."/>
            <person name="Hill K."/>
            <person name="Hitchcock P."/>
            <person name="Jackson P."/>
            <person name="Keim P."/>
            <person name="Longmire J."/>
            <person name="Lucas S."/>
            <person name="Okinaka R."/>
            <person name="Richardson P."/>
            <person name="Rubin E."/>
            <person name="Tice H."/>
        </authorList>
    </citation>
    <scope>NUCLEOTIDE SEQUENCE [LARGE SCALE GENOMIC DNA]</scope>
    <source>
        <strain>Sterne</strain>
    </source>
</reference>
<organism>
    <name type="scientific">Bacillus anthracis</name>
    <dbReference type="NCBI Taxonomy" id="1392"/>
    <lineage>
        <taxon>Bacteria</taxon>
        <taxon>Bacillati</taxon>
        <taxon>Bacillota</taxon>
        <taxon>Bacilli</taxon>
        <taxon>Bacillales</taxon>
        <taxon>Bacillaceae</taxon>
        <taxon>Bacillus</taxon>
        <taxon>Bacillus cereus group</taxon>
    </lineage>
</organism>
<gene>
    <name evidence="1" type="primary">hisD</name>
    <name type="ordered locus">BA_1426</name>
    <name type="ordered locus">GBAA_1426</name>
    <name type="ordered locus">BAS1317</name>
</gene>
<accession>Q81T62</accession>
<accession>Q6I1E5</accession>
<accession>Q6KV91</accession>
<comment type="function">
    <text evidence="1">Catalyzes the sequential NAD-dependent oxidations of L-histidinol to L-histidinaldehyde and then to L-histidine.</text>
</comment>
<comment type="catalytic activity">
    <reaction evidence="1">
        <text>L-histidinol + 2 NAD(+) + H2O = L-histidine + 2 NADH + 3 H(+)</text>
        <dbReference type="Rhea" id="RHEA:20641"/>
        <dbReference type="ChEBI" id="CHEBI:15377"/>
        <dbReference type="ChEBI" id="CHEBI:15378"/>
        <dbReference type="ChEBI" id="CHEBI:57540"/>
        <dbReference type="ChEBI" id="CHEBI:57595"/>
        <dbReference type="ChEBI" id="CHEBI:57699"/>
        <dbReference type="ChEBI" id="CHEBI:57945"/>
        <dbReference type="EC" id="1.1.1.23"/>
    </reaction>
</comment>
<comment type="cofactor">
    <cofactor evidence="1">
        <name>Zn(2+)</name>
        <dbReference type="ChEBI" id="CHEBI:29105"/>
    </cofactor>
    <text evidence="1">Binds 1 zinc ion per subunit.</text>
</comment>
<comment type="pathway">
    <text evidence="1">Amino-acid biosynthesis; L-histidine biosynthesis; L-histidine from 5-phospho-alpha-D-ribose 1-diphosphate: step 9/9.</text>
</comment>
<comment type="similarity">
    <text evidence="1">Belongs to the histidinol dehydrogenase family.</text>
</comment>
<sequence>MEIVCEDFQKALTKIKLLRENANIIEETVQRSVREIVQNVRESRDEALSFYTKKFDGVEIKDVRVSEEEIKQASMFVESSFLEALQEAKKNIISYHEKQKRQSMFDCTSKGIIRGQIIRPLENIGVYVPGGTASYPSSVLMNVLPAKLAGVKKIVMVTPPRAGGIDPHILVAASLAGVDEIYMIGGAQAIAALAYGTESIPKVDKIVGPGNLYVALAKREVYGIVNIDMIAGPSEIVVIADETGNAKYIAADLLSQAEHDERATAICITTNIELAKEVEKEIERQLETLPRSEIARESINRNGAIFIVPSIDEALQLSNEIAPEHLELHIKEPMNALAYVKHAGSIFLGPYAPEPLGDYLAGPNHVLPTSGTARFFSPLSVDDFVKKSSFLSYTEGALRDVKHHIVELANKEGLHAHARAIQIRFGEEE</sequence>